<proteinExistence type="inferred from homology"/>
<name>GRPE_METSB</name>
<organism>
    <name type="scientific">Methylocella silvestris (strain DSM 15510 / CIP 108128 / LMG 27833 / NCIMB 13906 / BL2)</name>
    <dbReference type="NCBI Taxonomy" id="395965"/>
    <lineage>
        <taxon>Bacteria</taxon>
        <taxon>Pseudomonadati</taxon>
        <taxon>Pseudomonadota</taxon>
        <taxon>Alphaproteobacteria</taxon>
        <taxon>Hyphomicrobiales</taxon>
        <taxon>Beijerinckiaceae</taxon>
        <taxon>Methylocella</taxon>
    </lineage>
</organism>
<gene>
    <name evidence="1" type="primary">grpE</name>
    <name type="ordered locus">Msil_2800</name>
</gene>
<accession>B8ET77</accession>
<protein>
    <recommendedName>
        <fullName evidence="1">Protein GrpE</fullName>
    </recommendedName>
    <alternativeName>
        <fullName evidence="1">HSP-70 cofactor</fullName>
    </alternativeName>
</protein>
<keyword id="KW-0143">Chaperone</keyword>
<keyword id="KW-0963">Cytoplasm</keyword>
<keyword id="KW-1185">Reference proteome</keyword>
<keyword id="KW-0346">Stress response</keyword>
<evidence type="ECO:0000255" key="1">
    <source>
        <dbReference type="HAMAP-Rule" id="MF_01151"/>
    </source>
</evidence>
<evidence type="ECO:0000256" key="2">
    <source>
        <dbReference type="SAM" id="MobiDB-lite"/>
    </source>
</evidence>
<feature type="chain" id="PRO_1000164203" description="Protein GrpE">
    <location>
        <begin position="1"/>
        <end position="187"/>
    </location>
</feature>
<feature type="region of interest" description="Disordered" evidence="2">
    <location>
        <begin position="1"/>
        <end position="26"/>
    </location>
</feature>
<comment type="function">
    <text evidence="1">Participates actively in the response to hyperosmotic and heat shock by preventing the aggregation of stress-denatured proteins, in association with DnaK and GrpE. It is the nucleotide exchange factor for DnaK and may function as a thermosensor. Unfolded proteins bind initially to DnaJ; upon interaction with the DnaJ-bound protein, DnaK hydrolyzes its bound ATP, resulting in the formation of a stable complex. GrpE releases ADP from DnaK; ATP binding to DnaK triggers the release of the substrate protein, thus completing the reaction cycle. Several rounds of ATP-dependent interactions between DnaJ, DnaK and GrpE are required for fully efficient folding.</text>
</comment>
<comment type="subunit">
    <text evidence="1">Homodimer.</text>
</comment>
<comment type="subcellular location">
    <subcellularLocation>
        <location evidence="1">Cytoplasm</location>
    </subcellularLocation>
</comment>
<comment type="similarity">
    <text evidence="1">Belongs to the GrpE family.</text>
</comment>
<dbReference type="EMBL" id="CP001280">
    <property type="protein sequence ID" value="ACK51719.1"/>
    <property type="molecule type" value="Genomic_DNA"/>
</dbReference>
<dbReference type="RefSeq" id="WP_012591788.1">
    <property type="nucleotide sequence ID" value="NC_011666.1"/>
</dbReference>
<dbReference type="SMR" id="B8ET77"/>
<dbReference type="STRING" id="395965.Msil_2800"/>
<dbReference type="KEGG" id="msl:Msil_2800"/>
<dbReference type="eggNOG" id="COG0576">
    <property type="taxonomic scope" value="Bacteria"/>
</dbReference>
<dbReference type="HOGENOM" id="CLU_057217_0_2_5"/>
<dbReference type="OrthoDB" id="9789811at2"/>
<dbReference type="Proteomes" id="UP000002257">
    <property type="component" value="Chromosome"/>
</dbReference>
<dbReference type="GO" id="GO:0005737">
    <property type="term" value="C:cytoplasm"/>
    <property type="evidence" value="ECO:0007669"/>
    <property type="project" value="UniProtKB-SubCell"/>
</dbReference>
<dbReference type="GO" id="GO:0000774">
    <property type="term" value="F:adenyl-nucleotide exchange factor activity"/>
    <property type="evidence" value="ECO:0007669"/>
    <property type="project" value="InterPro"/>
</dbReference>
<dbReference type="GO" id="GO:0042803">
    <property type="term" value="F:protein homodimerization activity"/>
    <property type="evidence" value="ECO:0007669"/>
    <property type="project" value="InterPro"/>
</dbReference>
<dbReference type="GO" id="GO:0051087">
    <property type="term" value="F:protein-folding chaperone binding"/>
    <property type="evidence" value="ECO:0007669"/>
    <property type="project" value="InterPro"/>
</dbReference>
<dbReference type="GO" id="GO:0051082">
    <property type="term" value="F:unfolded protein binding"/>
    <property type="evidence" value="ECO:0007669"/>
    <property type="project" value="TreeGrafter"/>
</dbReference>
<dbReference type="GO" id="GO:0006457">
    <property type="term" value="P:protein folding"/>
    <property type="evidence" value="ECO:0007669"/>
    <property type="project" value="InterPro"/>
</dbReference>
<dbReference type="CDD" id="cd00446">
    <property type="entry name" value="GrpE"/>
    <property type="match status" value="1"/>
</dbReference>
<dbReference type="FunFam" id="2.30.22.10:FF:000002">
    <property type="entry name" value="GrpE protein homolog"/>
    <property type="match status" value="1"/>
</dbReference>
<dbReference type="Gene3D" id="3.90.20.20">
    <property type="match status" value="1"/>
</dbReference>
<dbReference type="Gene3D" id="2.30.22.10">
    <property type="entry name" value="Head domain of nucleotide exchange factor GrpE"/>
    <property type="match status" value="1"/>
</dbReference>
<dbReference type="HAMAP" id="MF_01151">
    <property type="entry name" value="GrpE"/>
    <property type="match status" value="1"/>
</dbReference>
<dbReference type="InterPro" id="IPR000740">
    <property type="entry name" value="GrpE"/>
</dbReference>
<dbReference type="InterPro" id="IPR013805">
    <property type="entry name" value="GrpE_coiled_coil"/>
</dbReference>
<dbReference type="InterPro" id="IPR009012">
    <property type="entry name" value="GrpE_head"/>
</dbReference>
<dbReference type="NCBIfam" id="NF010739">
    <property type="entry name" value="PRK14141.1"/>
    <property type="match status" value="1"/>
</dbReference>
<dbReference type="PANTHER" id="PTHR21237">
    <property type="entry name" value="GRPE PROTEIN"/>
    <property type="match status" value="1"/>
</dbReference>
<dbReference type="PANTHER" id="PTHR21237:SF23">
    <property type="entry name" value="GRPE PROTEIN HOMOLOG, MITOCHONDRIAL"/>
    <property type="match status" value="1"/>
</dbReference>
<dbReference type="Pfam" id="PF01025">
    <property type="entry name" value="GrpE"/>
    <property type="match status" value="1"/>
</dbReference>
<dbReference type="PRINTS" id="PR00773">
    <property type="entry name" value="GRPEPROTEIN"/>
</dbReference>
<dbReference type="SUPFAM" id="SSF58014">
    <property type="entry name" value="Coiled-coil domain of nucleotide exchange factor GrpE"/>
    <property type="match status" value="1"/>
</dbReference>
<dbReference type="SUPFAM" id="SSF51064">
    <property type="entry name" value="Head domain of nucleotide exchange factor GrpE"/>
    <property type="match status" value="1"/>
</dbReference>
<dbReference type="PROSITE" id="PS01071">
    <property type="entry name" value="GRPE"/>
    <property type="match status" value="1"/>
</dbReference>
<sequence>MNDLKNAENGPDEADTPQGAPSQEPDPFVVLENLQAENTSLKDKLLRTLADMENLRRRTEKEVADAKTYGVTSFARDMLTFADNLHRALANVPAEARAKAEPAVQTLIEGLQLTERDFASRLERFGVKKIDPAGQKFDPNLHEALFEQPDESVPNGTVTQVIEPGYVIGERVLRPAKVGVSRGGPKG</sequence>
<reference key="1">
    <citation type="journal article" date="2010" name="J. Bacteriol.">
        <title>Complete genome sequence of the aerobic facultative methanotroph Methylocella silvestris BL2.</title>
        <authorList>
            <person name="Chen Y."/>
            <person name="Crombie A."/>
            <person name="Rahman M.T."/>
            <person name="Dedysh S.N."/>
            <person name="Liesack W."/>
            <person name="Stott M.B."/>
            <person name="Alam M."/>
            <person name="Theisen A.R."/>
            <person name="Murrell J.C."/>
            <person name="Dunfield P.F."/>
        </authorList>
    </citation>
    <scope>NUCLEOTIDE SEQUENCE [LARGE SCALE GENOMIC DNA]</scope>
    <source>
        <strain>DSM 15510 / CIP 108128 / LMG 27833 / NCIMB 13906 / BL2</strain>
    </source>
</reference>